<gene>
    <name evidence="1" type="primary">RPS0</name>
    <name type="ORF">CPC735_007440</name>
</gene>
<proteinExistence type="inferred from homology"/>
<keyword id="KW-0963">Cytoplasm</keyword>
<keyword id="KW-0687">Ribonucleoprotein</keyword>
<keyword id="KW-0689">Ribosomal protein</keyword>
<reference key="1">
    <citation type="journal article" date="2009" name="Genome Res.">
        <title>Comparative genomic analyses of the human fungal pathogens Coccidioides and their relatives.</title>
        <authorList>
            <person name="Sharpton T.J."/>
            <person name="Stajich J.E."/>
            <person name="Rounsley S.D."/>
            <person name="Gardner M.J."/>
            <person name="Wortman J.R."/>
            <person name="Jordar V.S."/>
            <person name="Maiti R."/>
            <person name="Kodira C.D."/>
            <person name="Neafsey D.E."/>
            <person name="Zeng Q."/>
            <person name="Hung C.-Y."/>
            <person name="McMahan C."/>
            <person name="Muszewska A."/>
            <person name="Grynberg M."/>
            <person name="Mandel M.A."/>
            <person name="Kellner E.M."/>
            <person name="Barker B.M."/>
            <person name="Galgiani J.N."/>
            <person name="Orbach M.J."/>
            <person name="Kirkland T.N."/>
            <person name="Cole G.T."/>
            <person name="Henn M.R."/>
            <person name="Birren B.W."/>
            <person name="Taylor J.W."/>
        </authorList>
    </citation>
    <scope>NUCLEOTIDE SEQUENCE [LARGE SCALE GENOMIC DNA]</scope>
    <source>
        <strain>C735</strain>
    </source>
</reference>
<organism>
    <name type="scientific">Coccidioides posadasii (strain C735)</name>
    <name type="common">Valley fever fungus</name>
    <dbReference type="NCBI Taxonomy" id="222929"/>
    <lineage>
        <taxon>Eukaryota</taxon>
        <taxon>Fungi</taxon>
        <taxon>Dikarya</taxon>
        <taxon>Ascomycota</taxon>
        <taxon>Pezizomycotina</taxon>
        <taxon>Eurotiomycetes</taxon>
        <taxon>Eurotiomycetidae</taxon>
        <taxon>Onygenales</taxon>
        <taxon>Onygenaceae</taxon>
        <taxon>Coccidioides</taxon>
    </lineage>
</organism>
<accession>C5PA09</accession>
<name>RSSA_COCP7</name>
<comment type="function">
    <text evidence="1">Required for the assembly and/or stability of the 40S ribosomal subunit. Required for the processing of the 20S rRNA-precursor to mature 18S rRNA in a late step of the maturation of 40S ribosomal subunits.</text>
</comment>
<comment type="subunit">
    <text evidence="1">Component of the small ribosomal subunit. Mature ribosomes consist of a small (40S) and a large (60S) subunit. The 40S subunit contains about 33 different proteins and 1 molecule of RNA (18S). The 60S subunit contains about 49 different proteins and 3 molecules of RNA (25S, 5.8S and 5S). Interacts with RPS21.</text>
</comment>
<comment type="subcellular location">
    <subcellularLocation>
        <location evidence="1">Cytoplasm</location>
    </subcellularLocation>
</comment>
<comment type="similarity">
    <text evidence="1">Belongs to the universal ribosomal protein uS2 family.</text>
</comment>
<sequence>MAPSNLPPVFNATSQDIEMLLAAQCHLGSKNLQVHMEPYLWKTRPDGINVINIGKTWEKIVLAARIIAAIDNPADICVISARPYGQRAVLKFAAHTGAVAIAGRFTPGSFTNYITRSFKEPRLIIVTDPRTDSQAIKEASYVNIPVIALCDTDSPTEFVDVAIPTNNKGRHAIGLVWWLLAREVLRLRGTLANRETEWDVVVDLYFYRDPEAEEAKELEEAKAPGVEEIGAAAVETGFGAEGWEAAGGSAFAAAASTTAPPNWEATGGDWATSTAPAEGWAGDAPAGETKW</sequence>
<dbReference type="EMBL" id="ACFW01000030">
    <property type="protein sequence ID" value="EER26571.1"/>
    <property type="molecule type" value="Genomic_DNA"/>
</dbReference>
<dbReference type="RefSeq" id="XP_003068716.1">
    <property type="nucleotide sequence ID" value="XM_003068670.1"/>
</dbReference>
<dbReference type="SMR" id="C5PA09"/>
<dbReference type="GeneID" id="9694199"/>
<dbReference type="KEGG" id="cpw:9694199"/>
<dbReference type="VEuPathDB" id="FungiDB:CPC735_007440"/>
<dbReference type="HOGENOM" id="CLU_058171_0_1_1"/>
<dbReference type="OrthoDB" id="414863at2759"/>
<dbReference type="Proteomes" id="UP000009084">
    <property type="component" value="Unassembled WGS sequence"/>
</dbReference>
<dbReference type="GO" id="GO:0022627">
    <property type="term" value="C:cytosolic small ribosomal subunit"/>
    <property type="evidence" value="ECO:0007669"/>
    <property type="project" value="UniProtKB-UniRule"/>
</dbReference>
<dbReference type="GO" id="GO:0003735">
    <property type="term" value="F:structural constituent of ribosome"/>
    <property type="evidence" value="ECO:0007669"/>
    <property type="project" value="UniProtKB-UniRule"/>
</dbReference>
<dbReference type="GO" id="GO:0000028">
    <property type="term" value="P:ribosomal small subunit assembly"/>
    <property type="evidence" value="ECO:0007669"/>
    <property type="project" value="UniProtKB-UniRule"/>
</dbReference>
<dbReference type="GO" id="GO:0006412">
    <property type="term" value="P:translation"/>
    <property type="evidence" value="ECO:0007669"/>
    <property type="project" value="UniProtKB-UniRule"/>
</dbReference>
<dbReference type="CDD" id="cd01425">
    <property type="entry name" value="RPS2"/>
    <property type="match status" value="1"/>
</dbReference>
<dbReference type="FunFam" id="3.40.50.10490:FF:000010">
    <property type="entry name" value="40S ribosomal protein S0"/>
    <property type="match status" value="1"/>
</dbReference>
<dbReference type="Gene3D" id="3.40.50.10490">
    <property type="entry name" value="Glucose-6-phosphate isomerase like protein, domain 1"/>
    <property type="match status" value="1"/>
</dbReference>
<dbReference type="HAMAP" id="MF_03015">
    <property type="entry name" value="Ribosomal_S2_euk"/>
    <property type="match status" value="1"/>
</dbReference>
<dbReference type="InterPro" id="IPR001865">
    <property type="entry name" value="Ribosomal_uS2"/>
</dbReference>
<dbReference type="InterPro" id="IPR032281">
    <property type="entry name" value="Ribosomal_uS2_C"/>
</dbReference>
<dbReference type="InterPro" id="IPR018130">
    <property type="entry name" value="Ribosomal_uS2_CS"/>
</dbReference>
<dbReference type="InterPro" id="IPR027498">
    <property type="entry name" value="Ribosomal_uS2_euk"/>
</dbReference>
<dbReference type="InterPro" id="IPR005707">
    <property type="entry name" value="Ribosomal_uS2_euk/arc"/>
</dbReference>
<dbReference type="InterPro" id="IPR023591">
    <property type="entry name" value="Ribosomal_uS2_flav_dom_sf"/>
</dbReference>
<dbReference type="NCBIfam" id="TIGR01012">
    <property type="entry name" value="uS2_euk_arch"/>
    <property type="match status" value="1"/>
</dbReference>
<dbReference type="PANTHER" id="PTHR11489">
    <property type="entry name" value="40S RIBOSOMAL PROTEIN SA"/>
    <property type="match status" value="1"/>
</dbReference>
<dbReference type="Pfam" id="PF16122">
    <property type="entry name" value="40S_SA_C"/>
    <property type="match status" value="1"/>
</dbReference>
<dbReference type="Pfam" id="PF00318">
    <property type="entry name" value="Ribosomal_S2"/>
    <property type="match status" value="2"/>
</dbReference>
<dbReference type="PRINTS" id="PR00395">
    <property type="entry name" value="RIBOSOMALS2"/>
</dbReference>
<dbReference type="SUPFAM" id="SSF52313">
    <property type="entry name" value="Ribosomal protein S2"/>
    <property type="match status" value="1"/>
</dbReference>
<dbReference type="PROSITE" id="PS00963">
    <property type="entry name" value="RIBOSOMAL_S2_2"/>
    <property type="match status" value="1"/>
</dbReference>
<feature type="chain" id="PRO_0000389275" description="Small ribosomal subunit protein uS2">
    <location>
        <begin position="1"/>
        <end position="291"/>
    </location>
</feature>
<feature type="region of interest" description="Disordered" evidence="2">
    <location>
        <begin position="256"/>
        <end position="291"/>
    </location>
</feature>
<protein>
    <recommendedName>
        <fullName evidence="1">Small ribosomal subunit protein uS2</fullName>
    </recommendedName>
    <alternativeName>
        <fullName evidence="3">40S ribosomal protein S0</fullName>
    </alternativeName>
</protein>
<evidence type="ECO:0000255" key="1">
    <source>
        <dbReference type="HAMAP-Rule" id="MF_03015"/>
    </source>
</evidence>
<evidence type="ECO:0000256" key="2">
    <source>
        <dbReference type="SAM" id="MobiDB-lite"/>
    </source>
</evidence>
<evidence type="ECO:0000305" key="3"/>